<dbReference type="EC" id="2.5.1.3" evidence="1"/>
<dbReference type="EMBL" id="CP000686">
    <property type="protein sequence ID" value="ABQ90316.1"/>
    <property type="molecule type" value="Genomic_DNA"/>
</dbReference>
<dbReference type="RefSeq" id="WP_011956662.1">
    <property type="nucleotide sequence ID" value="NC_009523.1"/>
</dbReference>
<dbReference type="SMR" id="A5UUL3"/>
<dbReference type="STRING" id="357808.RoseRS_1927"/>
<dbReference type="KEGG" id="rrs:RoseRS_1927"/>
<dbReference type="eggNOG" id="COG0352">
    <property type="taxonomic scope" value="Bacteria"/>
</dbReference>
<dbReference type="HOGENOM" id="CLU_018272_3_2_0"/>
<dbReference type="OrthoDB" id="9812206at2"/>
<dbReference type="UniPathway" id="UPA00060">
    <property type="reaction ID" value="UER00141"/>
</dbReference>
<dbReference type="Proteomes" id="UP000006554">
    <property type="component" value="Chromosome"/>
</dbReference>
<dbReference type="GO" id="GO:0005737">
    <property type="term" value="C:cytoplasm"/>
    <property type="evidence" value="ECO:0007669"/>
    <property type="project" value="TreeGrafter"/>
</dbReference>
<dbReference type="GO" id="GO:0000287">
    <property type="term" value="F:magnesium ion binding"/>
    <property type="evidence" value="ECO:0007669"/>
    <property type="project" value="UniProtKB-UniRule"/>
</dbReference>
<dbReference type="GO" id="GO:0004789">
    <property type="term" value="F:thiamine-phosphate diphosphorylase activity"/>
    <property type="evidence" value="ECO:0007669"/>
    <property type="project" value="UniProtKB-UniRule"/>
</dbReference>
<dbReference type="GO" id="GO:0009228">
    <property type="term" value="P:thiamine biosynthetic process"/>
    <property type="evidence" value="ECO:0007669"/>
    <property type="project" value="UniProtKB-KW"/>
</dbReference>
<dbReference type="GO" id="GO:0009229">
    <property type="term" value="P:thiamine diphosphate biosynthetic process"/>
    <property type="evidence" value="ECO:0007669"/>
    <property type="project" value="UniProtKB-UniRule"/>
</dbReference>
<dbReference type="CDD" id="cd00564">
    <property type="entry name" value="TMP_TenI"/>
    <property type="match status" value="1"/>
</dbReference>
<dbReference type="FunFam" id="3.20.20.70:FF:000096">
    <property type="entry name" value="Thiamine-phosphate synthase"/>
    <property type="match status" value="1"/>
</dbReference>
<dbReference type="Gene3D" id="3.20.20.70">
    <property type="entry name" value="Aldolase class I"/>
    <property type="match status" value="1"/>
</dbReference>
<dbReference type="HAMAP" id="MF_00097">
    <property type="entry name" value="TMP_synthase"/>
    <property type="match status" value="1"/>
</dbReference>
<dbReference type="InterPro" id="IPR013785">
    <property type="entry name" value="Aldolase_TIM"/>
</dbReference>
<dbReference type="InterPro" id="IPR036206">
    <property type="entry name" value="ThiamineP_synth_sf"/>
</dbReference>
<dbReference type="InterPro" id="IPR022998">
    <property type="entry name" value="ThiamineP_synth_TenI"/>
</dbReference>
<dbReference type="InterPro" id="IPR034291">
    <property type="entry name" value="TMP_synthase"/>
</dbReference>
<dbReference type="NCBIfam" id="TIGR00693">
    <property type="entry name" value="thiE"/>
    <property type="match status" value="1"/>
</dbReference>
<dbReference type="PANTHER" id="PTHR20857">
    <property type="entry name" value="THIAMINE-PHOSPHATE PYROPHOSPHORYLASE"/>
    <property type="match status" value="1"/>
</dbReference>
<dbReference type="PANTHER" id="PTHR20857:SF15">
    <property type="entry name" value="THIAMINE-PHOSPHATE SYNTHASE"/>
    <property type="match status" value="1"/>
</dbReference>
<dbReference type="Pfam" id="PF02581">
    <property type="entry name" value="TMP-TENI"/>
    <property type="match status" value="1"/>
</dbReference>
<dbReference type="SUPFAM" id="SSF51391">
    <property type="entry name" value="Thiamin phosphate synthase"/>
    <property type="match status" value="1"/>
</dbReference>
<accession>A5UUL3</accession>
<reference key="1">
    <citation type="submission" date="2007-04" db="EMBL/GenBank/DDBJ databases">
        <title>Complete sequence of Roseiflexus sp. RS-1.</title>
        <authorList>
            <consortium name="US DOE Joint Genome Institute"/>
            <person name="Copeland A."/>
            <person name="Lucas S."/>
            <person name="Lapidus A."/>
            <person name="Barry K."/>
            <person name="Detter J.C."/>
            <person name="Glavina del Rio T."/>
            <person name="Hammon N."/>
            <person name="Israni S."/>
            <person name="Dalin E."/>
            <person name="Tice H."/>
            <person name="Pitluck S."/>
            <person name="Chertkov O."/>
            <person name="Brettin T."/>
            <person name="Bruce D."/>
            <person name="Han C."/>
            <person name="Schmutz J."/>
            <person name="Larimer F."/>
            <person name="Land M."/>
            <person name="Hauser L."/>
            <person name="Kyrpides N."/>
            <person name="Mikhailova N."/>
            <person name="Bryant D.A."/>
            <person name="Richardson P."/>
        </authorList>
    </citation>
    <scope>NUCLEOTIDE SEQUENCE [LARGE SCALE GENOMIC DNA]</scope>
    <source>
        <strain>RS-1</strain>
    </source>
</reference>
<comment type="function">
    <text evidence="1">Condenses 4-methyl-5-(beta-hydroxyethyl)thiazole monophosphate (THZ-P) and 2-methyl-4-amino-5-hydroxymethyl pyrimidine pyrophosphate (HMP-PP) to form thiamine monophosphate (TMP).</text>
</comment>
<comment type="catalytic activity">
    <reaction evidence="1">
        <text>2-[(2R,5Z)-2-carboxy-4-methylthiazol-5(2H)-ylidene]ethyl phosphate + 4-amino-2-methyl-5-(diphosphooxymethyl)pyrimidine + 2 H(+) = thiamine phosphate + CO2 + diphosphate</text>
        <dbReference type="Rhea" id="RHEA:47844"/>
        <dbReference type="ChEBI" id="CHEBI:15378"/>
        <dbReference type="ChEBI" id="CHEBI:16526"/>
        <dbReference type="ChEBI" id="CHEBI:33019"/>
        <dbReference type="ChEBI" id="CHEBI:37575"/>
        <dbReference type="ChEBI" id="CHEBI:57841"/>
        <dbReference type="ChEBI" id="CHEBI:62899"/>
        <dbReference type="EC" id="2.5.1.3"/>
    </reaction>
</comment>
<comment type="catalytic activity">
    <reaction evidence="1">
        <text>2-(2-carboxy-4-methylthiazol-5-yl)ethyl phosphate + 4-amino-2-methyl-5-(diphosphooxymethyl)pyrimidine + 2 H(+) = thiamine phosphate + CO2 + diphosphate</text>
        <dbReference type="Rhea" id="RHEA:47848"/>
        <dbReference type="ChEBI" id="CHEBI:15378"/>
        <dbReference type="ChEBI" id="CHEBI:16526"/>
        <dbReference type="ChEBI" id="CHEBI:33019"/>
        <dbReference type="ChEBI" id="CHEBI:37575"/>
        <dbReference type="ChEBI" id="CHEBI:57841"/>
        <dbReference type="ChEBI" id="CHEBI:62890"/>
        <dbReference type="EC" id="2.5.1.3"/>
    </reaction>
</comment>
<comment type="catalytic activity">
    <reaction evidence="1">
        <text>4-methyl-5-(2-phosphooxyethyl)-thiazole + 4-amino-2-methyl-5-(diphosphooxymethyl)pyrimidine + H(+) = thiamine phosphate + diphosphate</text>
        <dbReference type="Rhea" id="RHEA:22328"/>
        <dbReference type="ChEBI" id="CHEBI:15378"/>
        <dbReference type="ChEBI" id="CHEBI:33019"/>
        <dbReference type="ChEBI" id="CHEBI:37575"/>
        <dbReference type="ChEBI" id="CHEBI:57841"/>
        <dbReference type="ChEBI" id="CHEBI:58296"/>
        <dbReference type="EC" id="2.5.1.3"/>
    </reaction>
</comment>
<comment type="cofactor">
    <cofactor evidence="1">
        <name>Mg(2+)</name>
        <dbReference type="ChEBI" id="CHEBI:18420"/>
    </cofactor>
    <text evidence="1">Binds 1 Mg(2+) ion per subunit.</text>
</comment>
<comment type="pathway">
    <text evidence="1">Cofactor biosynthesis; thiamine diphosphate biosynthesis; thiamine phosphate from 4-amino-2-methyl-5-diphosphomethylpyrimidine and 4-methyl-5-(2-phosphoethyl)-thiazole: step 1/1.</text>
</comment>
<comment type="similarity">
    <text evidence="1">Belongs to the thiamine-phosphate synthase family.</text>
</comment>
<feature type="chain" id="PRO_0000336424" description="Thiamine-phosphate synthase">
    <location>
        <begin position="1"/>
        <end position="236"/>
    </location>
</feature>
<feature type="binding site" evidence="1">
    <location>
        <begin position="57"/>
        <end position="61"/>
    </location>
    <ligand>
        <name>4-amino-2-methyl-5-(diphosphooxymethyl)pyrimidine</name>
        <dbReference type="ChEBI" id="CHEBI:57841"/>
    </ligand>
</feature>
<feature type="binding site" evidence="1">
    <location>
        <position position="89"/>
    </location>
    <ligand>
        <name>4-amino-2-methyl-5-(diphosphooxymethyl)pyrimidine</name>
        <dbReference type="ChEBI" id="CHEBI:57841"/>
    </ligand>
</feature>
<feature type="binding site" evidence="1">
    <location>
        <position position="90"/>
    </location>
    <ligand>
        <name>Mg(2+)</name>
        <dbReference type="ChEBI" id="CHEBI:18420"/>
    </ligand>
</feature>
<feature type="binding site" evidence="1">
    <location>
        <position position="109"/>
    </location>
    <ligand>
        <name>Mg(2+)</name>
        <dbReference type="ChEBI" id="CHEBI:18420"/>
    </ligand>
</feature>
<feature type="binding site" evidence="1">
    <location>
        <position position="128"/>
    </location>
    <ligand>
        <name>4-amino-2-methyl-5-(diphosphooxymethyl)pyrimidine</name>
        <dbReference type="ChEBI" id="CHEBI:57841"/>
    </ligand>
</feature>
<feature type="binding site" evidence="1">
    <location>
        <begin position="154"/>
        <end position="156"/>
    </location>
    <ligand>
        <name>2-[(2R,5Z)-2-carboxy-4-methylthiazol-5(2H)-ylidene]ethyl phosphate</name>
        <dbReference type="ChEBI" id="CHEBI:62899"/>
    </ligand>
</feature>
<feature type="binding site" evidence="1">
    <location>
        <position position="157"/>
    </location>
    <ligand>
        <name>4-amino-2-methyl-5-(diphosphooxymethyl)pyrimidine</name>
        <dbReference type="ChEBI" id="CHEBI:57841"/>
    </ligand>
</feature>
<feature type="binding site" evidence="1">
    <location>
        <position position="185"/>
    </location>
    <ligand>
        <name>2-[(2R,5Z)-2-carboxy-4-methylthiazol-5(2H)-ylidene]ethyl phosphate</name>
        <dbReference type="ChEBI" id="CHEBI:62899"/>
    </ligand>
</feature>
<feature type="binding site" evidence="1">
    <location>
        <begin position="205"/>
        <end position="206"/>
    </location>
    <ligand>
        <name>2-[(2R,5Z)-2-carboxy-4-methylthiazol-5(2H)-ylidene]ethyl phosphate</name>
        <dbReference type="ChEBI" id="CHEBI:62899"/>
    </ligand>
</feature>
<evidence type="ECO:0000255" key="1">
    <source>
        <dbReference type="HAMAP-Rule" id="MF_00097"/>
    </source>
</evidence>
<protein>
    <recommendedName>
        <fullName evidence="1">Thiamine-phosphate synthase</fullName>
        <shortName evidence="1">TP synthase</shortName>
        <shortName evidence="1">TPS</shortName>
        <ecNumber evidence="1">2.5.1.3</ecNumber>
    </recommendedName>
    <alternativeName>
        <fullName evidence="1">Thiamine-phosphate pyrophosphorylase</fullName>
        <shortName evidence="1">TMP pyrophosphorylase</shortName>
        <shortName evidence="1">TMP-PPase</shortName>
    </alternativeName>
</protein>
<gene>
    <name evidence="1" type="primary">thiE</name>
    <name type="ordered locus">RoseRS_1927</name>
</gene>
<name>THIE_ROSS1</name>
<sequence>MVLSTLIEPLPSVQSDPIPFPSGGGIVYVITDRRAAGERALTDIVSAALRGGAHVIQLRDKDVPARDMVALGQALLPLTRDAGVPLIVNDRVDVALALDADGVHVGQDDIPAEMVRRIIGPERILGVSVATVEQAQRAMDAGATYVSVGDLFGTPSKPDAGPPIGLEPLAEIARTVNLPVLGIGGINLANAASVIRAGAVGVAVISAVIGAPDPEAATRALHAVIASALDERARAG</sequence>
<proteinExistence type="inferred from homology"/>
<organism>
    <name type="scientific">Roseiflexus sp. (strain RS-1)</name>
    <dbReference type="NCBI Taxonomy" id="357808"/>
    <lineage>
        <taxon>Bacteria</taxon>
        <taxon>Bacillati</taxon>
        <taxon>Chloroflexota</taxon>
        <taxon>Chloroflexia</taxon>
        <taxon>Chloroflexales</taxon>
        <taxon>Roseiflexineae</taxon>
        <taxon>Roseiflexaceae</taxon>
        <taxon>Roseiflexus</taxon>
    </lineage>
</organism>
<keyword id="KW-0460">Magnesium</keyword>
<keyword id="KW-0479">Metal-binding</keyword>
<keyword id="KW-0784">Thiamine biosynthesis</keyword>
<keyword id="KW-0808">Transferase</keyword>